<protein>
    <recommendedName>
        <fullName>Protein lin-54 homolog</fullName>
    </recommendedName>
</protein>
<proteinExistence type="evidence at protein level"/>
<evidence type="ECO:0000250" key="1"/>
<evidence type="ECO:0000250" key="2">
    <source>
        <dbReference type="UniProtKB" id="Q6MZP7"/>
    </source>
</evidence>
<evidence type="ECO:0000255" key="3">
    <source>
        <dbReference type="PROSITE-ProRule" id="PRU00971"/>
    </source>
</evidence>
<evidence type="ECO:0000256" key="4">
    <source>
        <dbReference type="SAM" id="MobiDB-lite"/>
    </source>
</evidence>
<evidence type="ECO:0000269" key="5">
    <source>
    </source>
</evidence>
<evidence type="ECO:0000305" key="6"/>
<feature type="chain" id="PRO_0000341393" description="Protein lin-54 homolog">
    <location>
        <begin position="1"/>
        <end position="771"/>
    </location>
</feature>
<feature type="domain" description="CRC" evidence="3">
    <location>
        <begin position="544"/>
        <end position="657"/>
    </location>
</feature>
<feature type="region of interest" description="Disordered" evidence="4">
    <location>
        <begin position="21"/>
        <end position="44"/>
    </location>
</feature>
<feature type="region of interest" description="Disordered" evidence="4">
    <location>
        <begin position="68"/>
        <end position="105"/>
    </location>
</feature>
<feature type="region of interest" description="DNA-binding" evidence="2">
    <location>
        <begin position="546"/>
        <end position="559"/>
    </location>
</feature>
<feature type="region of interest" description="Linker" evidence="2">
    <location>
        <begin position="606"/>
        <end position="619"/>
    </location>
</feature>
<feature type="region of interest" description="DNA-binding" evidence="2">
    <location>
        <begin position="622"/>
        <end position="635"/>
    </location>
</feature>
<feature type="compositionally biased region" description="Low complexity" evidence="4">
    <location>
        <begin position="72"/>
        <end position="92"/>
    </location>
</feature>
<feature type="binding site" evidence="2">
    <location>
        <position position="548"/>
    </location>
    <ligand>
        <name>Zn(2+)</name>
        <dbReference type="ChEBI" id="CHEBI:29105"/>
        <label>1</label>
    </ligand>
</feature>
<feature type="binding site" evidence="2">
    <location>
        <position position="548"/>
    </location>
    <ligand>
        <name>Zn(2+)</name>
        <dbReference type="ChEBI" id="CHEBI:29105"/>
        <label>2</label>
    </ligand>
</feature>
<feature type="binding site" evidence="2">
    <location>
        <position position="550"/>
    </location>
    <ligand>
        <name>Zn(2+)</name>
        <dbReference type="ChEBI" id="CHEBI:29105"/>
        <label>1</label>
    </ligand>
</feature>
<feature type="binding site" evidence="2">
    <location>
        <position position="555"/>
    </location>
    <ligand>
        <name>Zn(2+)</name>
        <dbReference type="ChEBI" id="CHEBI:29105"/>
        <label>1</label>
    </ligand>
</feature>
<feature type="binding site" evidence="2">
    <location>
        <position position="555"/>
    </location>
    <ligand>
        <name>Zn(2+)</name>
        <dbReference type="ChEBI" id="CHEBI:29105"/>
        <label>3</label>
    </ligand>
</feature>
<feature type="binding site" evidence="2">
    <location>
        <position position="560"/>
    </location>
    <ligand>
        <name>Zn(2+)</name>
        <dbReference type="ChEBI" id="CHEBI:29105"/>
        <label>1</label>
    </ligand>
</feature>
<feature type="binding site" evidence="2">
    <location>
        <position position="562"/>
    </location>
    <ligand>
        <name>Zn(2+)</name>
        <dbReference type="ChEBI" id="CHEBI:29105"/>
        <label>2</label>
    </ligand>
</feature>
<feature type="binding site" evidence="2">
    <location>
        <position position="569"/>
    </location>
    <ligand>
        <name>Zn(2+)</name>
        <dbReference type="ChEBI" id="CHEBI:29105"/>
        <label>2</label>
    </ligand>
</feature>
<feature type="binding site" evidence="2">
    <location>
        <position position="569"/>
    </location>
    <ligand>
        <name>Zn(2+)</name>
        <dbReference type="ChEBI" id="CHEBI:29105"/>
        <label>3</label>
    </ligand>
</feature>
<feature type="binding site" evidence="2">
    <location>
        <position position="572"/>
    </location>
    <ligand>
        <name>Zn(2+)</name>
        <dbReference type="ChEBI" id="CHEBI:29105"/>
        <label>2</label>
    </ligand>
</feature>
<feature type="binding site" evidence="2">
    <location>
        <position position="574"/>
    </location>
    <ligand>
        <name>Zn(2+)</name>
        <dbReference type="ChEBI" id="CHEBI:29105"/>
        <label>3</label>
    </ligand>
</feature>
<feature type="binding site" evidence="2">
    <location>
        <position position="577"/>
    </location>
    <ligand>
        <name>Zn(2+)</name>
        <dbReference type="ChEBI" id="CHEBI:29105"/>
        <label>3</label>
    </ligand>
</feature>
<feature type="binding site" evidence="2">
    <location>
        <position position="622"/>
    </location>
    <ligand>
        <name>Zn(2+)</name>
        <dbReference type="ChEBI" id="CHEBI:29105"/>
        <label>4</label>
    </ligand>
</feature>
<feature type="binding site" evidence="2">
    <location>
        <position position="622"/>
    </location>
    <ligand>
        <name>Zn(2+)</name>
        <dbReference type="ChEBI" id="CHEBI:29105"/>
        <label>5</label>
    </ligand>
</feature>
<feature type="binding site" evidence="2">
    <location>
        <position position="624"/>
    </location>
    <ligand>
        <name>Zn(2+)</name>
        <dbReference type="ChEBI" id="CHEBI:29105"/>
        <label>4</label>
    </ligand>
</feature>
<feature type="binding site" evidence="2">
    <location>
        <position position="629"/>
    </location>
    <ligand>
        <name>Zn(2+)</name>
        <dbReference type="ChEBI" id="CHEBI:29105"/>
        <label>4</label>
    </ligand>
</feature>
<feature type="binding site" evidence="2">
    <location>
        <position position="629"/>
    </location>
    <ligand>
        <name>Zn(2+)</name>
        <dbReference type="ChEBI" id="CHEBI:29105"/>
        <label>6</label>
    </ligand>
</feature>
<feature type="binding site" evidence="2">
    <location>
        <position position="634"/>
    </location>
    <ligand>
        <name>Zn(2+)</name>
        <dbReference type="ChEBI" id="CHEBI:29105"/>
        <label>4</label>
    </ligand>
</feature>
<feature type="binding site" evidence="2">
    <location>
        <position position="636"/>
    </location>
    <ligand>
        <name>Zn(2+)</name>
        <dbReference type="ChEBI" id="CHEBI:29105"/>
        <label>5</label>
    </ligand>
</feature>
<feature type="binding site" evidence="2">
    <location>
        <position position="643"/>
    </location>
    <ligand>
        <name>Zn(2+)</name>
        <dbReference type="ChEBI" id="CHEBI:29105"/>
        <label>5</label>
    </ligand>
</feature>
<feature type="binding site" evidence="2">
    <location>
        <position position="643"/>
    </location>
    <ligand>
        <name>Zn(2+)</name>
        <dbReference type="ChEBI" id="CHEBI:29105"/>
        <label>6</label>
    </ligand>
</feature>
<feature type="binding site" evidence="2">
    <location>
        <position position="647"/>
    </location>
    <ligand>
        <name>Zn(2+)</name>
        <dbReference type="ChEBI" id="CHEBI:29105"/>
        <label>5</label>
    </ligand>
</feature>
<feature type="binding site" evidence="2">
    <location>
        <position position="649"/>
    </location>
    <ligand>
        <name>Zn(2+)</name>
        <dbReference type="ChEBI" id="CHEBI:29105"/>
        <label>6</label>
    </ligand>
</feature>
<feature type="binding site" evidence="2">
    <location>
        <position position="652"/>
    </location>
    <ligand>
        <name>Zn(2+)</name>
        <dbReference type="ChEBI" id="CHEBI:29105"/>
        <label>6</label>
    </ligand>
</feature>
<feature type="site" description="Critical for interaction with target DNA" evidence="2">
    <location>
        <position position="559"/>
    </location>
</feature>
<feature type="site" description="Interaction with DNA" evidence="2">
    <location>
        <position position="597"/>
    </location>
</feature>
<feature type="site" description="Critical for interaction with target DNA" evidence="2">
    <location>
        <position position="633"/>
    </location>
</feature>
<feature type="modified residue" description="Phosphoserine" evidence="5">
    <location>
        <position position="288"/>
    </location>
</feature>
<feature type="modified residue" description="Phosphoserine" evidence="5">
    <location>
        <position position="292"/>
    </location>
</feature>
<feature type="modified residue" description="Phosphoserine" evidence="5">
    <location>
        <position position="308"/>
    </location>
</feature>
<organism>
    <name type="scientific">Danio rerio</name>
    <name type="common">Zebrafish</name>
    <name type="synonym">Brachydanio rerio</name>
    <dbReference type="NCBI Taxonomy" id="7955"/>
    <lineage>
        <taxon>Eukaryota</taxon>
        <taxon>Metazoa</taxon>
        <taxon>Chordata</taxon>
        <taxon>Craniata</taxon>
        <taxon>Vertebrata</taxon>
        <taxon>Euteleostomi</taxon>
        <taxon>Actinopterygii</taxon>
        <taxon>Neopterygii</taxon>
        <taxon>Teleostei</taxon>
        <taxon>Ostariophysi</taxon>
        <taxon>Cypriniformes</taxon>
        <taxon>Danionidae</taxon>
        <taxon>Danioninae</taxon>
        <taxon>Danio</taxon>
    </lineage>
</organism>
<keyword id="KW-0010">Activator</keyword>
<keyword id="KW-0131">Cell cycle</keyword>
<keyword id="KW-0238">DNA-binding</keyword>
<keyword id="KW-0479">Metal-binding</keyword>
<keyword id="KW-0539">Nucleus</keyword>
<keyword id="KW-0597">Phosphoprotein</keyword>
<keyword id="KW-1185">Reference proteome</keyword>
<keyword id="KW-0678">Repressor</keyword>
<keyword id="KW-0804">Transcription</keyword>
<keyword id="KW-0805">Transcription regulation</keyword>
<keyword id="KW-0862">Zinc</keyword>
<dbReference type="EMBL" id="BC124175">
    <property type="protein sequence ID" value="AAI24176.1"/>
    <property type="molecule type" value="mRNA"/>
</dbReference>
<dbReference type="RefSeq" id="NP_001070035.1">
    <property type="nucleotide sequence ID" value="NM_001076567.1"/>
</dbReference>
<dbReference type="SMR" id="Q08CM4"/>
<dbReference type="FunCoup" id="Q08CM4">
    <property type="interactions" value="2965"/>
</dbReference>
<dbReference type="STRING" id="7955.ENSDARP00000086543"/>
<dbReference type="iPTMnet" id="Q08CM4"/>
<dbReference type="PaxDb" id="7955-ENSDARP00000086543"/>
<dbReference type="GeneID" id="560688"/>
<dbReference type="KEGG" id="dre:560688"/>
<dbReference type="AGR" id="ZFIN:ZDB-GENE-060929-440"/>
<dbReference type="CTD" id="132660"/>
<dbReference type="ZFIN" id="ZDB-GENE-060929-440">
    <property type="gene designation" value="lin54"/>
</dbReference>
<dbReference type="eggNOG" id="KOG1171">
    <property type="taxonomic scope" value="Eukaryota"/>
</dbReference>
<dbReference type="InParanoid" id="Q08CM4"/>
<dbReference type="OrthoDB" id="6283463at2759"/>
<dbReference type="PhylomeDB" id="Q08CM4"/>
<dbReference type="Reactome" id="R-DRE-1538133">
    <property type="pathway name" value="G0 and Early G1"/>
</dbReference>
<dbReference type="PRO" id="PR:Q08CM4"/>
<dbReference type="Proteomes" id="UP000000437">
    <property type="component" value="Chromosome 10"/>
</dbReference>
<dbReference type="GO" id="GO:0005634">
    <property type="term" value="C:nucleus"/>
    <property type="evidence" value="ECO:0000318"/>
    <property type="project" value="GO_Central"/>
</dbReference>
<dbReference type="GO" id="GO:0003677">
    <property type="term" value="F:DNA binding"/>
    <property type="evidence" value="ECO:0007669"/>
    <property type="project" value="UniProtKB-KW"/>
</dbReference>
<dbReference type="GO" id="GO:0046872">
    <property type="term" value="F:metal ion binding"/>
    <property type="evidence" value="ECO:0007669"/>
    <property type="project" value="UniProtKB-KW"/>
</dbReference>
<dbReference type="GO" id="GO:0006355">
    <property type="term" value="P:regulation of DNA-templated transcription"/>
    <property type="evidence" value="ECO:0000318"/>
    <property type="project" value="GO_Central"/>
</dbReference>
<dbReference type="InterPro" id="IPR005172">
    <property type="entry name" value="CRC"/>
</dbReference>
<dbReference type="InterPro" id="IPR028307">
    <property type="entry name" value="Lin-54_fam"/>
</dbReference>
<dbReference type="InterPro" id="IPR033467">
    <property type="entry name" value="Tesmin/TSO1-like_CXC"/>
</dbReference>
<dbReference type="PANTHER" id="PTHR12446:SF34">
    <property type="entry name" value="PROTEIN LIN-54 HOMOLOG"/>
    <property type="match status" value="1"/>
</dbReference>
<dbReference type="PANTHER" id="PTHR12446">
    <property type="entry name" value="TESMIN/TSO1-RELATED"/>
    <property type="match status" value="1"/>
</dbReference>
<dbReference type="Pfam" id="PF03638">
    <property type="entry name" value="TCR"/>
    <property type="match status" value="2"/>
</dbReference>
<dbReference type="SMART" id="SM01114">
    <property type="entry name" value="CXC"/>
    <property type="match status" value="2"/>
</dbReference>
<dbReference type="PROSITE" id="PS51634">
    <property type="entry name" value="CRC"/>
    <property type="match status" value="1"/>
</dbReference>
<comment type="function">
    <text evidence="2">Component of the DREAM complex, a multiprotein complex that can both act as a transcription activator or repressor depending on the context. Specifically recognizes the consensus motif 5'-TTYRAA-3' in target DNA.</text>
</comment>
<comment type="subunit">
    <text evidence="1">Component of the DREAM complex.</text>
</comment>
<comment type="subcellular location">
    <subcellularLocation>
        <location evidence="1">Nucleus</location>
    </subcellularLocation>
</comment>
<comment type="domain">
    <text evidence="2">The CRC domain mediates DNA-binding. It contains two CXC subdomains (joined by a flexible linker) which are both required for efficient association with target DNA. Each CXC subdomain coordinates three Zn(2+) ions.</text>
</comment>
<comment type="similarity">
    <text evidence="6">Belongs to the lin-54 family.</text>
</comment>
<reference key="1">
    <citation type="submission" date="2006-09" db="EMBL/GenBank/DDBJ databases">
        <authorList>
            <consortium name="NIH - Zebrafish Gene Collection (ZGC) project"/>
        </authorList>
    </citation>
    <scope>NUCLEOTIDE SEQUENCE [LARGE SCALE MRNA]</scope>
</reference>
<reference key="2">
    <citation type="journal article" date="2008" name="J. Proteome Res.">
        <title>Online automated in vivo zebrafish phosphoproteomics: from large-scale analysis down to a single embryo.</title>
        <authorList>
            <person name="Lemeer S."/>
            <person name="Pinkse M.W.H."/>
            <person name="Mohammed S."/>
            <person name="van Breukelen B."/>
            <person name="den Hertog J."/>
            <person name="Slijper M."/>
            <person name="Heck A.J.R."/>
        </authorList>
    </citation>
    <scope>PHOSPHORYLATION [LARGE SCALE ANALYSIS] AT SER-288; SER-292 AND SER-308</scope>
    <scope>IDENTIFICATION BY MASS SPECTROMETRY</scope>
    <source>
        <tissue>Embryo</tissue>
    </source>
</reference>
<accession>Q08CM4</accession>
<gene>
    <name type="primary">lin54</name>
    <name type="ORF">zgc:152921</name>
</gene>
<sequence>MDVVSPELNSLLPDEIMDTEAMDEDPPASHLTPPPQSAPESAQVPMETEVPEIISICPTTASMQAISTNAKSTTSSTTQLLLTPSSSSSTTTKNATPTLPKIPSLSVPPNHQLIINKVAADGKSPGGAVIKQEGQKLLVAGLSKTGQPIMLALPHAWNKPATSQGSGDAKSQPTQIKMVTAMGKPVIAVSSASQLVASSTPLQAQHLKTLQITKKPPVSTAGPMITKLIITKALNNKVLSSPGSVSPVVTGRVVSQSTPLTPPRTIAIGETISTVPQNAATNSKVAISPLKSPSKLTVVSVTSQSSNSPQKSMTLPLNVALGQQILTVQQSAVTSPAKAGSSQSTTQTVKPVQTVTVPTSQFKTIIPLTTPPNVQQIQVPGSRFHYVRLVTATTGSSTVQTGGSTNTNPSIQPAKPVMMNAAVRMSVPIVPAQTAKQVVPKPLSSAAQVVTTSQTPQRLIMPATHLPQIQPNLTNLPPGTVLAPAHGSGNVGYAVLPAPYVTQIPQPAFVTLTSSSTFSTATPSQAQARLSLNGLSTSEANSRPRKPCNCTRSQCLKLYCDCFANGEFCNNCNCVNCFNNLDHESERLKAIKACLDRNPVAFKPKIGKGKEGESDRRHSKGCNCKKSGCLKNYCECYEAKIMCSSICKCMGCKNFEESPERKTLMHLADAAEVRVQQQTAAKTKLSSQISDLLTRTTPAITSGGGKLPYTFVTKEVAEATCDCLLEQAEQAELTNQPQAMAERLILEEFGRCLHRIISFAGKAKTDCPINC</sequence>
<name>LIN54_DANRE</name>